<accession>A9AAG2</accession>
<name>RL37_METM6</name>
<gene>
    <name evidence="1" type="primary">rpl37e</name>
    <name type="ordered locus">MmarC6_1522</name>
</gene>
<reference key="1">
    <citation type="submission" date="2007-10" db="EMBL/GenBank/DDBJ databases">
        <title>Complete sequence of Methanococcus maripaludis C6.</title>
        <authorList>
            <consortium name="US DOE Joint Genome Institute"/>
            <person name="Copeland A."/>
            <person name="Lucas S."/>
            <person name="Lapidus A."/>
            <person name="Barry K."/>
            <person name="Glavina del Rio T."/>
            <person name="Dalin E."/>
            <person name="Tice H."/>
            <person name="Pitluck S."/>
            <person name="Clum A."/>
            <person name="Schmutz J."/>
            <person name="Larimer F."/>
            <person name="Land M."/>
            <person name="Hauser L."/>
            <person name="Kyrpides N."/>
            <person name="Mikhailova N."/>
            <person name="Sieprawska-Lupa M."/>
            <person name="Whitman W.B."/>
            <person name="Richardson P."/>
        </authorList>
    </citation>
    <scope>NUCLEOTIDE SEQUENCE [LARGE SCALE GENOMIC DNA]</scope>
    <source>
        <strain>C6 / ATCC BAA-1332</strain>
    </source>
</reference>
<protein>
    <recommendedName>
        <fullName evidence="1">Large ribosomal subunit protein eL37</fullName>
    </recommendedName>
    <alternativeName>
        <fullName evidence="2">50S ribosomal protein L37e</fullName>
    </alternativeName>
</protein>
<proteinExistence type="inferred from homology"/>
<dbReference type="EMBL" id="CP000867">
    <property type="protein sequence ID" value="ABX02335.1"/>
    <property type="molecule type" value="Genomic_DNA"/>
</dbReference>
<dbReference type="SMR" id="A9AAG2"/>
<dbReference type="STRING" id="444158.MmarC6_1522"/>
<dbReference type="KEGG" id="mmx:MmarC6_1522"/>
<dbReference type="eggNOG" id="arCOG04126">
    <property type="taxonomic scope" value="Archaea"/>
</dbReference>
<dbReference type="HOGENOM" id="CLU_208825_0_0_2"/>
<dbReference type="OrthoDB" id="5619at2157"/>
<dbReference type="PhylomeDB" id="A9AAG2"/>
<dbReference type="GO" id="GO:1990904">
    <property type="term" value="C:ribonucleoprotein complex"/>
    <property type="evidence" value="ECO:0007669"/>
    <property type="project" value="UniProtKB-KW"/>
</dbReference>
<dbReference type="GO" id="GO:0005840">
    <property type="term" value="C:ribosome"/>
    <property type="evidence" value="ECO:0007669"/>
    <property type="project" value="UniProtKB-KW"/>
</dbReference>
<dbReference type="GO" id="GO:0019843">
    <property type="term" value="F:rRNA binding"/>
    <property type="evidence" value="ECO:0007669"/>
    <property type="project" value="UniProtKB-KW"/>
</dbReference>
<dbReference type="GO" id="GO:0003735">
    <property type="term" value="F:structural constituent of ribosome"/>
    <property type="evidence" value="ECO:0007669"/>
    <property type="project" value="InterPro"/>
</dbReference>
<dbReference type="GO" id="GO:0008270">
    <property type="term" value="F:zinc ion binding"/>
    <property type="evidence" value="ECO:0007669"/>
    <property type="project" value="UniProtKB-UniRule"/>
</dbReference>
<dbReference type="GO" id="GO:0006412">
    <property type="term" value="P:translation"/>
    <property type="evidence" value="ECO:0007669"/>
    <property type="project" value="UniProtKB-UniRule"/>
</dbReference>
<dbReference type="FunFam" id="2.20.25.30:FF:000003">
    <property type="entry name" value="50S ribosomal protein L37e"/>
    <property type="match status" value="1"/>
</dbReference>
<dbReference type="Gene3D" id="2.20.25.30">
    <property type="match status" value="1"/>
</dbReference>
<dbReference type="HAMAP" id="MF_00547">
    <property type="entry name" value="Ribosomal_eL37"/>
    <property type="match status" value="1"/>
</dbReference>
<dbReference type="InterPro" id="IPR001569">
    <property type="entry name" value="Ribosomal_eL37"/>
</dbReference>
<dbReference type="InterPro" id="IPR011331">
    <property type="entry name" value="Ribosomal_eL37/eL43"/>
</dbReference>
<dbReference type="InterPro" id="IPR018267">
    <property type="entry name" value="Ribosomal_eL37_CS"/>
</dbReference>
<dbReference type="InterPro" id="IPR011332">
    <property type="entry name" value="Ribosomal_zn-bd"/>
</dbReference>
<dbReference type="NCBIfam" id="NF003214">
    <property type="entry name" value="PRK04179.1"/>
    <property type="match status" value="1"/>
</dbReference>
<dbReference type="Pfam" id="PF01907">
    <property type="entry name" value="Ribosomal_L37e"/>
    <property type="match status" value="1"/>
</dbReference>
<dbReference type="SUPFAM" id="SSF57829">
    <property type="entry name" value="Zn-binding ribosomal proteins"/>
    <property type="match status" value="1"/>
</dbReference>
<dbReference type="PROSITE" id="PS01077">
    <property type="entry name" value="RIBOSOMAL_L37E"/>
    <property type="match status" value="1"/>
</dbReference>
<sequence length="64" mass="7229">MTKGTPSQGKHNKGSNHIVCRRCGRRAFHVRKKVCAACGFGKSSKIKRFAWQWKKVTGKGNRVK</sequence>
<evidence type="ECO:0000255" key="1">
    <source>
        <dbReference type="HAMAP-Rule" id="MF_00547"/>
    </source>
</evidence>
<evidence type="ECO:0000305" key="2"/>
<feature type="chain" id="PRO_1000128942" description="Large ribosomal subunit protein eL37">
    <location>
        <begin position="1"/>
        <end position="64"/>
    </location>
</feature>
<feature type="zinc finger region" description="C4-type" evidence="1">
    <location>
        <begin position="20"/>
        <end position="38"/>
    </location>
</feature>
<feature type="binding site" evidence="1">
    <location>
        <position position="20"/>
    </location>
    <ligand>
        <name>Zn(2+)</name>
        <dbReference type="ChEBI" id="CHEBI:29105"/>
    </ligand>
</feature>
<feature type="binding site" evidence="1">
    <location>
        <position position="23"/>
    </location>
    <ligand>
        <name>Zn(2+)</name>
        <dbReference type="ChEBI" id="CHEBI:29105"/>
    </ligand>
</feature>
<feature type="binding site" evidence="1">
    <location>
        <position position="35"/>
    </location>
    <ligand>
        <name>Zn(2+)</name>
        <dbReference type="ChEBI" id="CHEBI:29105"/>
    </ligand>
</feature>
<feature type="binding site" evidence="1">
    <location>
        <position position="38"/>
    </location>
    <ligand>
        <name>Zn(2+)</name>
        <dbReference type="ChEBI" id="CHEBI:29105"/>
    </ligand>
</feature>
<comment type="function">
    <text evidence="1">Binds to the 23S rRNA.</text>
</comment>
<comment type="cofactor">
    <cofactor evidence="1">
        <name>Zn(2+)</name>
        <dbReference type="ChEBI" id="CHEBI:29105"/>
    </cofactor>
    <text evidence="1">Binds 1 zinc ion per subunit.</text>
</comment>
<comment type="similarity">
    <text evidence="1">Belongs to the eukaryotic ribosomal protein eL37 family.</text>
</comment>
<organism>
    <name type="scientific">Methanococcus maripaludis (strain C6 / ATCC BAA-1332)</name>
    <dbReference type="NCBI Taxonomy" id="444158"/>
    <lineage>
        <taxon>Archaea</taxon>
        <taxon>Methanobacteriati</taxon>
        <taxon>Methanobacteriota</taxon>
        <taxon>Methanomada group</taxon>
        <taxon>Methanococci</taxon>
        <taxon>Methanococcales</taxon>
        <taxon>Methanococcaceae</taxon>
        <taxon>Methanococcus</taxon>
    </lineage>
</organism>
<keyword id="KW-0479">Metal-binding</keyword>
<keyword id="KW-0687">Ribonucleoprotein</keyword>
<keyword id="KW-0689">Ribosomal protein</keyword>
<keyword id="KW-0694">RNA-binding</keyword>
<keyword id="KW-0699">rRNA-binding</keyword>
<keyword id="KW-0862">Zinc</keyword>
<keyword id="KW-0863">Zinc-finger</keyword>